<organism>
    <name type="scientific">Clostridium perfringens (strain ATCC 13124 / DSM 756 / JCM 1290 / NCIMB 6125 / NCTC 8237 / Type A)</name>
    <dbReference type="NCBI Taxonomy" id="195103"/>
    <lineage>
        <taxon>Bacteria</taxon>
        <taxon>Bacillati</taxon>
        <taxon>Bacillota</taxon>
        <taxon>Clostridia</taxon>
        <taxon>Eubacteriales</taxon>
        <taxon>Clostridiaceae</taxon>
        <taxon>Clostridium</taxon>
    </lineage>
</organism>
<gene>
    <name evidence="1" type="primary">addB</name>
    <name type="ordered locus">CPF_0024</name>
</gene>
<keyword id="KW-0004">4Fe-4S</keyword>
<keyword id="KW-0067">ATP-binding</keyword>
<keyword id="KW-0227">DNA damage</keyword>
<keyword id="KW-0234">DNA repair</keyword>
<keyword id="KW-0238">DNA-binding</keyword>
<keyword id="KW-0269">Exonuclease</keyword>
<keyword id="KW-0347">Helicase</keyword>
<keyword id="KW-0378">Hydrolase</keyword>
<keyword id="KW-0408">Iron</keyword>
<keyword id="KW-0411">Iron-sulfur</keyword>
<keyword id="KW-0479">Metal-binding</keyword>
<keyword id="KW-0540">Nuclease</keyword>
<keyword id="KW-0547">Nucleotide-binding</keyword>
<comment type="function">
    <text evidence="1">The heterodimer acts as both an ATP-dependent DNA helicase and an ATP-dependent, dual-direction single-stranded exonuclease. Recognizes the chi site generating a DNA molecule suitable for the initiation of homologous recombination. The AddB subunit has 5' -&gt; 3' nuclease activity but not helicase activity.</text>
</comment>
<comment type="cofactor">
    <cofactor evidence="1">
        <name>Mg(2+)</name>
        <dbReference type="ChEBI" id="CHEBI:18420"/>
    </cofactor>
</comment>
<comment type="cofactor">
    <cofactor evidence="1">
        <name>[4Fe-4S] cluster</name>
        <dbReference type="ChEBI" id="CHEBI:49883"/>
    </cofactor>
    <text evidence="1">Binds 1 [4Fe-4S] cluster.</text>
</comment>
<comment type="subunit">
    <text evidence="1">Heterodimer of AddA and AddB.</text>
</comment>
<comment type="miscellaneous">
    <text evidence="1">Despite having conserved helicase domains, this subunit does not have helicase activity.</text>
</comment>
<comment type="similarity">
    <text evidence="1">Belongs to the helicase family. AddB/RexB type 1 subfamily.</text>
</comment>
<sequence>MGLKIIYGRAGTGKSTFCINQIKKKINNSPTNKLILIVPEQFTFQTENKVLNAIGERYVLNAEVLSFKRLAHNVFNECGGATRTIMGDAGKSMLIFKVLEDLGDNMTVFKNASRQKGFIDIASKTITEFKKYNVNNEVLDLTINEIEDENLKMKMEELKDVFNEFNSRLHEGYVDEEDQLLLLNEKLDGCSLYDGAEIWIDEFSSFTPNQLSVIGKLLKRAKSVNITLSIDEVNSPKGESDLFVATKNTEKRLMNLIQEEGIAFNGYINLNEDISYRFKENKELAHIERQLYAYPFKQYRGKNNSLRLYRANNNYDEIEFVAKDILRLVREKQYRFKDISVICRDVDNYEKVVSAIFAEYEIPYYIDKKIDIASNPLIVFINSAVDIISKNWTYESMFKYLKTGLIKEFRGIEGAELIDELENYVLAYGIKGKKWMEEWVNYSSSILKEEEISEEDKQRLERLNDIRENIVTPLDEFNKQCKGKKTLKEFATILYEFLDSKLDVMDTIDKYVDYFKENDMAIEAKEYYEVRDIFIDVLEQAVDVLGNEVMDLNEFMKVLNIGLSQYEMGLIPVALDQVNIGDITRIKSRGTKALYIIGVNDGVLPSASKEEGILSDNDREILLEKGISLASDTRTKIFEEQFLVYTAFTIAEEYLVVTYPLADFEGKSQRPSIIVHRLKKILPNVKEESEGFKLVDDKYEKISAKLPTLNELMIAIRKNYDGAEIEDYWKYVYDWYLREPKWKERIEYVRKGLEYTNLENNISKEKAKKLYEDNKNKISLSVSRLERYAQCPFAYYIQYGLKAKDRKIYEFTAPDLGSFMHEILDEFTNEIKEKDLKWSDLSKENCRNIINSLVDNQVKNNKSSILNSSKRYSYFTDRFKRILTKSVMVISEQMKRSDFEIYKNELAFGFSKDVNSIKLDLPSGESFYLNGRIDRVDKLNLDGETYLRIIDYKTGSKKFDLNKFYNGLQMQLLVYLDALINNSENIVENQAMPGAILYFRIDDPILKSKGDLTEEEIKSEVLKELKLEGLLLDDVKVVKAMDNTLEPGTHSLIIPANMKKAGDLGKNKALITMEQFELLRKYVNEKMVEICQNMIEGKIDIEPCKENKNIVCDYCNYSHICQFDSSLEDNRYKVIPKKKDEDIWKSINEKVGGEVNGD</sequence>
<proteinExistence type="inferred from homology"/>
<accession>Q0TV47</accession>
<protein>
    <recommendedName>
        <fullName evidence="1">ATP-dependent helicase/deoxyribonuclease subunit B</fullName>
        <ecNumber evidence="1">3.1.-.-</ecNumber>
    </recommendedName>
    <alternativeName>
        <fullName evidence="1">ATP-dependent helicase/nuclease subunit AddB</fullName>
    </alternativeName>
</protein>
<dbReference type="EC" id="3.1.-.-" evidence="1"/>
<dbReference type="EMBL" id="CP000246">
    <property type="protein sequence ID" value="ABG82499.1"/>
    <property type="molecule type" value="Genomic_DNA"/>
</dbReference>
<dbReference type="RefSeq" id="WP_011590030.1">
    <property type="nucleotide sequence ID" value="NC_008261.1"/>
</dbReference>
<dbReference type="SMR" id="Q0TV47"/>
<dbReference type="STRING" id="195103.CPF_0024"/>
<dbReference type="PaxDb" id="195103-CPF_0024"/>
<dbReference type="KEGG" id="cpf:CPF_0024"/>
<dbReference type="eggNOG" id="COG3857">
    <property type="taxonomic scope" value="Bacteria"/>
</dbReference>
<dbReference type="HOGENOM" id="CLU_007838_0_0_9"/>
<dbReference type="Proteomes" id="UP000001823">
    <property type="component" value="Chromosome"/>
</dbReference>
<dbReference type="GO" id="GO:0051539">
    <property type="term" value="F:4 iron, 4 sulfur cluster binding"/>
    <property type="evidence" value="ECO:0007669"/>
    <property type="project" value="UniProtKB-KW"/>
</dbReference>
<dbReference type="GO" id="GO:0008409">
    <property type="term" value="F:5'-3' exonuclease activity"/>
    <property type="evidence" value="ECO:0007669"/>
    <property type="project" value="UniProtKB-UniRule"/>
</dbReference>
<dbReference type="GO" id="GO:0005524">
    <property type="term" value="F:ATP binding"/>
    <property type="evidence" value="ECO:0007669"/>
    <property type="project" value="UniProtKB-UniRule"/>
</dbReference>
<dbReference type="GO" id="GO:0003690">
    <property type="term" value="F:double-stranded DNA binding"/>
    <property type="evidence" value="ECO:0007669"/>
    <property type="project" value="UniProtKB-UniRule"/>
</dbReference>
<dbReference type="GO" id="GO:0004386">
    <property type="term" value="F:helicase activity"/>
    <property type="evidence" value="ECO:0007669"/>
    <property type="project" value="UniProtKB-KW"/>
</dbReference>
<dbReference type="GO" id="GO:0046872">
    <property type="term" value="F:metal ion binding"/>
    <property type="evidence" value="ECO:0007669"/>
    <property type="project" value="UniProtKB-KW"/>
</dbReference>
<dbReference type="GO" id="GO:0000724">
    <property type="term" value="P:double-strand break repair via homologous recombination"/>
    <property type="evidence" value="ECO:0007669"/>
    <property type="project" value="UniProtKB-UniRule"/>
</dbReference>
<dbReference type="Gene3D" id="3.90.320.10">
    <property type="match status" value="1"/>
</dbReference>
<dbReference type="Gene3D" id="6.10.140.1030">
    <property type="match status" value="1"/>
</dbReference>
<dbReference type="Gene3D" id="3.40.50.300">
    <property type="entry name" value="P-loop containing nucleotide triphosphate hydrolases"/>
    <property type="match status" value="3"/>
</dbReference>
<dbReference type="HAMAP" id="MF_01452">
    <property type="entry name" value="AddB_type1"/>
    <property type="match status" value="1"/>
</dbReference>
<dbReference type="InterPro" id="IPR049035">
    <property type="entry name" value="ADDB_N"/>
</dbReference>
<dbReference type="InterPro" id="IPR014140">
    <property type="entry name" value="DNA_helicase_suAddB"/>
</dbReference>
<dbReference type="InterPro" id="IPR027417">
    <property type="entry name" value="P-loop_NTPase"/>
</dbReference>
<dbReference type="InterPro" id="IPR011604">
    <property type="entry name" value="PDDEXK-like_dom_sf"/>
</dbReference>
<dbReference type="InterPro" id="IPR038726">
    <property type="entry name" value="PDDEXK_AddAB-type"/>
</dbReference>
<dbReference type="InterPro" id="IPR011335">
    <property type="entry name" value="Restrct_endonuc-II-like"/>
</dbReference>
<dbReference type="NCBIfam" id="TIGR02773">
    <property type="entry name" value="addB_Gpos"/>
    <property type="match status" value="1"/>
</dbReference>
<dbReference type="PANTHER" id="PTHR30591">
    <property type="entry name" value="RECBCD ENZYME SUBUNIT RECC"/>
    <property type="match status" value="1"/>
</dbReference>
<dbReference type="PANTHER" id="PTHR30591:SF1">
    <property type="entry name" value="RECBCD ENZYME SUBUNIT RECC"/>
    <property type="match status" value="1"/>
</dbReference>
<dbReference type="Pfam" id="PF21445">
    <property type="entry name" value="ADDB_N"/>
    <property type="match status" value="1"/>
</dbReference>
<dbReference type="Pfam" id="PF12705">
    <property type="entry name" value="PDDEXK_1"/>
    <property type="match status" value="1"/>
</dbReference>
<dbReference type="SUPFAM" id="SSF52540">
    <property type="entry name" value="P-loop containing nucleoside triphosphate hydrolases"/>
    <property type="match status" value="2"/>
</dbReference>
<dbReference type="SUPFAM" id="SSF52980">
    <property type="entry name" value="Restriction endonuclease-like"/>
    <property type="match status" value="1"/>
</dbReference>
<evidence type="ECO:0000255" key="1">
    <source>
        <dbReference type="HAMAP-Rule" id="MF_01452"/>
    </source>
</evidence>
<name>ADDB_CLOP1</name>
<reference key="1">
    <citation type="journal article" date="2006" name="Genome Res.">
        <title>Skewed genomic variability in strains of the toxigenic bacterial pathogen, Clostridium perfringens.</title>
        <authorList>
            <person name="Myers G.S.A."/>
            <person name="Rasko D.A."/>
            <person name="Cheung J.K."/>
            <person name="Ravel J."/>
            <person name="Seshadri R."/>
            <person name="DeBoy R.T."/>
            <person name="Ren Q."/>
            <person name="Varga J."/>
            <person name="Awad M.M."/>
            <person name="Brinkac L.M."/>
            <person name="Daugherty S.C."/>
            <person name="Haft D.H."/>
            <person name="Dodson R.J."/>
            <person name="Madupu R."/>
            <person name="Nelson W.C."/>
            <person name="Rosovitz M.J."/>
            <person name="Sullivan S.A."/>
            <person name="Khouri H."/>
            <person name="Dimitrov G.I."/>
            <person name="Watkins K.L."/>
            <person name="Mulligan S."/>
            <person name="Benton J."/>
            <person name="Radune D."/>
            <person name="Fisher D.J."/>
            <person name="Atkins H.S."/>
            <person name="Hiscox T."/>
            <person name="Jost B.H."/>
            <person name="Billington S.J."/>
            <person name="Songer J.G."/>
            <person name="McClane B.A."/>
            <person name="Titball R.W."/>
            <person name="Rood J.I."/>
            <person name="Melville S.B."/>
            <person name="Paulsen I.T."/>
        </authorList>
    </citation>
    <scope>NUCLEOTIDE SEQUENCE [LARGE SCALE GENOMIC DNA]</scope>
    <source>
        <strain>ATCC 13124 / DSM 756 / JCM 1290 / NCIMB 6125 / NCTC 8237 / S 107 / Type A</strain>
    </source>
</reference>
<feature type="chain" id="PRO_0000379181" description="ATP-dependent helicase/deoxyribonuclease subunit B">
    <location>
        <begin position="1"/>
        <end position="1158"/>
    </location>
</feature>
<feature type="binding site" evidence="1">
    <location>
        <begin position="8"/>
        <end position="15"/>
    </location>
    <ligand>
        <name>ATP</name>
        <dbReference type="ChEBI" id="CHEBI:30616"/>
    </ligand>
</feature>
<feature type="binding site" evidence="1">
    <location>
        <position position="791"/>
    </location>
    <ligand>
        <name>[4Fe-4S] cluster</name>
        <dbReference type="ChEBI" id="CHEBI:49883"/>
    </ligand>
</feature>
<feature type="binding site" evidence="1">
    <location>
        <position position="1112"/>
    </location>
    <ligand>
        <name>[4Fe-4S] cluster</name>
        <dbReference type="ChEBI" id="CHEBI:49883"/>
    </ligand>
</feature>
<feature type="binding site" evidence="1">
    <location>
        <position position="1115"/>
    </location>
    <ligand>
        <name>[4Fe-4S] cluster</name>
        <dbReference type="ChEBI" id="CHEBI:49883"/>
    </ligand>
</feature>
<feature type="binding site" evidence="1">
    <location>
        <position position="1121"/>
    </location>
    <ligand>
        <name>[4Fe-4S] cluster</name>
        <dbReference type="ChEBI" id="CHEBI:49883"/>
    </ligand>
</feature>